<organism>
    <name type="scientific">Caenorhabditis elegans</name>
    <dbReference type="NCBI Taxonomy" id="6239"/>
    <lineage>
        <taxon>Eukaryota</taxon>
        <taxon>Metazoa</taxon>
        <taxon>Ecdysozoa</taxon>
        <taxon>Nematoda</taxon>
        <taxon>Chromadorea</taxon>
        <taxon>Rhabditida</taxon>
        <taxon>Rhabditina</taxon>
        <taxon>Rhabditomorpha</taxon>
        <taxon>Rhabditoidea</taxon>
        <taxon>Rhabditidae</taxon>
        <taxon>Peloderinae</taxon>
        <taxon>Caenorhabditis</taxon>
    </lineage>
</organism>
<protein>
    <recommendedName>
        <fullName>Nuclear migration and anchoring protein unc-84</fullName>
    </recommendedName>
    <alternativeName>
        <fullName>Uncoordinated protein 84</fullName>
    </alternativeName>
</protein>
<comment type="function">
    <text evidence="3 4 5 6 7 8 9 10 11 12 13 14">Involved in nuclear migration and anchoring in hypodermal precursor cells (PubMed:10375507, PubMed:11748140, PubMed:11907270, PubMed:12169658, PubMed:16481402, PubMed:20921138, PubMed:21411627, PubMed:23150597, PubMed:25023515, PubMed:25057012). Most likely recruits anc-1 to the nuclear envelope where anc-1 functions to tether the nucleus to the actin cytoskeleton (PubMed:12169658). Component of the unc-83-unc-84 LINC (LInker of Nucleoskeleton and Cytoskeleton) complex where it recruits and interacts with unc-83 to form a bridge connecting the nuclear envelope to the cytoskeleton which allows for nuclear transport along microtubules (PubMed:11748140, PubMed:16481402). Its role in nuclear migration may be in association with lamin, lmn-1 (PubMed:25057012). Regulates nuclear migrations in one-cell embryos, controlling the posterior migration of the male pronucleus following fertilization (PubMed:21798253). Not required for centrosome attachment to the nucleus (PubMed:10375507, PubMed:11907270). Plays a role in the maintenance of the nuclear envelope architecture in body wall muscle cells (PubMed:25023515). May be involved in DNA damage repair through an association with zyg-12 (PubMed:27956467). Potentially has roles in homologous recombination, double strand break repair and meiotic recombination (PubMed:27956467). Specifically, may in part inhibit non-homologous end joining repair, most likely through recruiting fan-1 to the nucleoplasm, to facilitate the repair of DNA cross-links (PubMed:27956467).</text>
</comment>
<comment type="subunit">
    <text evidence="4 6 7 13 14">Component of the unc-83-unc-84 LINC complex which contains at least unc-83 and unc-84 (PubMed:11748140, PubMed:16481402). Within the unc-83-unc-84 LINC complex interacts (via C-terminus) with unc-83; the interaction is probably required to recruit unc-83 to the nuclear membrane (PubMed:11748140, PubMed:16481402). Most likely interacts with anc-1; the interaction is probably required to recruit anc-1 to the nuclear envelope (PubMed:12169658). Interacts (via C-terminus) with zyg-12 (via C-terminus); the interaction is direct (PubMed:27956467). May interact with lmn-1; this interaction may be required to complete the connection between the nuclear lamina and the cytoskeleton (PubMed:25057012).</text>
</comment>
<comment type="subcellular location">
    <subcellularLocation>
        <location evidence="3 4 5 7 14 19">Nucleus inner membrane</location>
        <topology evidence="17">Single-pass type II membrane protein</topology>
    </subcellularLocation>
    <subcellularLocation>
        <location evidence="17">Cytoplasm</location>
        <location evidence="17">Cytoskeleton</location>
    </subcellularLocation>
    <text evidence="4 5">Associated with nuclei during interphase, prophase, prometaphase, metaphase and early anaphase (PubMed:11907270). Released from nuclear membrane in the same time that the nuclear envelope disassembly, during late anaphase, and begins to reaccumulate in early telophase (PubMed:11907270). Localization at the nuclear envelope depends on lmn-1 (PubMed:11748140, PubMed:11907270). Co-localizes with unc-83 at the nuclear envelope, but its localization at the nuclear envelope does not depend on unc-83 (PubMed:11748140, PubMed:11907270).</text>
</comment>
<comment type="alternative products">
    <event type="alternative splicing"/>
    <isoform>
        <id>Q20745-1</id>
        <name evidence="20">a</name>
        <name evidence="16">L</name>
        <sequence type="displayed"/>
    </isoform>
    <isoform>
        <id>Q20745-2</id>
        <name evidence="21">b</name>
        <name evidence="16">S</name>
        <sequence type="described" ref="VSP_007081 VSP_007082"/>
    </isoform>
</comment>
<comment type="tissue specificity">
    <text evidence="5 14">Expressed in all somatic cells (PubMed:11907270, PubMed:27956467). Not expressed in germ cells in the mitotic and transition zones of the gonad (PubMed:11907270). One study shows expression at the beginning of the late pachytene stage in the proximal gonad, but there is no expression in the male germline, suggesting expression is specific to oogenesis in hermaphrodites (PubMed:27956467).</text>
</comment>
<comment type="developmental stage">
    <text evidence="3 5">Expressed in all cells of embryos from the 26-cell stage (PubMed:10375507, PubMed:11907270). Then, it is ubiquitously expressed throughout the development (PubMed:10375507, PubMed:11907270). Not expressed between fertilization and the 26-cell stage (PubMed:11907270).</text>
</comment>
<comment type="induction">
    <text evidence="14">Induced by DNA-damage.</text>
</comment>
<comment type="domain">
    <text evidence="6 7">The SUN domain probably plays a role in the nuclear anchoring and/or migration. Required for the localization of unc-83 and anc-1 at the nuclear membrane.</text>
</comment>
<reference key="1">
    <citation type="journal article" date="1999" name="Development">
        <title>UNC-84 localizes to the nuclear envelope and is required for nuclear migration and anchoring during C. elegans development.</title>
        <authorList>
            <person name="Malone C.J."/>
            <person name="Fixsen W.D."/>
            <person name="Horvitz H.R."/>
            <person name="Han M."/>
        </authorList>
    </citation>
    <scope>NUCLEOTIDE SEQUENCE [MRNA] (ISOFORMS A AND B)</scope>
    <scope>FUNCTION</scope>
    <scope>SUBCELLULAR LOCATION</scope>
    <scope>DEVELOPMENTAL STAGE</scope>
    <scope>MUTAGENESIS OF 1-MET--ARG-208; 40-LEU--LYS-161; PRO-91; ASP-932; ARG-984; SER-988; CYS-994 AND GLY-1002</scope>
    <source>
        <strain>Bristol N2</strain>
        <tissue>Embryo</tissue>
    </source>
</reference>
<reference key="2">
    <citation type="journal article" date="1998" name="Science">
        <title>Genome sequence of the nematode C. elegans: a platform for investigating biology.</title>
        <authorList>
            <consortium name="The C. elegans sequencing consortium"/>
        </authorList>
    </citation>
    <scope>NUCLEOTIDE SEQUENCE [LARGE SCALE GENOMIC DNA]</scope>
    <source>
        <strain>Bristol N2</strain>
    </source>
</reference>
<reference key="3">
    <citation type="journal article" date="2001" name="Development">
        <title>unc-83 encodes a novel component of the nuclear envelope and is essential for proper nuclear migration.</title>
        <authorList>
            <person name="Starr D.A."/>
            <person name="Hermann G.J."/>
            <person name="Malone C.J."/>
            <person name="Fixsen W."/>
            <person name="Priess J.R."/>
            <person name="Horvitz H.R."/>
            <person name="Han M."/>
        </authorList>
    </citation>
    <scope>FUNCTION</scope>
    <scope>INTERACTION WITH UNC-83</scope>
    <scope>SUBCELLULAR LOCATION</scope>
    <scope>MUTAGENESIS OF 1-MET--ARG-208; PRO-91; ASP-932; ARG-984; SER-988 AND GLY-1002</scope>
</reference>
<reference key="4">
    <citation type="journal article" date="2002" name="J. Cell Sci.">
        <title>The expression, lamin-dependent localization and RNAi depletion phenotype for emerin in C. elegans.</title>
        <authorList>
            <person name="Gruenbaum Y."/>
            <person name="Lee K.K."/>
            <person name="Liu J."/>
            <person name="Cohen M."/>
            <person name="Wilson K.L."/>
        </authorList>
    </citation>
    <scope>SUBCELLULAR LOCATION</scope>
</reference>
<reference key="5">
    <citation type="journal article" date="2002" name="Science">
        <title>Role of ANC-1 in tethering nuclei to the actin cytoskeleton.</title>
        <authorList>
            <person name="Starr D.A."/>
            <person name="Han M."/>
        </authorList>
    </citation>
    <scope>FUNCTION</scope>
    <scope>INTERACTION WITH ANC-1</scope>
    <scope>MUTAGENESIS OF PRO-91 AND GLY-1002</scope>
</reference>
<reference key="6">
    <citation type="journal article" date="2002" name="Mol. Biol. Cell">
        <title>Lamin-dependent localization of UNC-84, a protein required for nuclear migration in Caenorhabditis elegans.</title>
        <authorList>
            <person name="Lee K.K."/>
            <person name="Starr D.A."/>
            <person name="Cohen M."/>
            <person name="Liu J."/>
            <person name="Han M."/>
            <person name="Wilson K.L."/>
            <person name="Gruenbaum Y."/>
        </authorList>
    </citation>
    <scope>FUNCTION</scope>
    <scope>SUBCELLULAR LOCATION</scope>
    <scope>TISSUE SPECIFICITY</scope>
    <scope>DEVELOPMENTAL STAGE</scope>
    <scope>MUTAGENESIS OF ASP-932; ARG-984; SER-988 AND GLY-1002</scope>
</reference>
<reference key="7">
    <citation type="journal article" date="2006" name="Mol. Biol. Cell">
        <title>UNC-83 IS a KASH protein required for nuclear migration and is recruited to the outer nuclear membrane by a physical interaction with the SUN protein UNC-84.</title>
        <authorList>
            <person name="McGee M.D."/>
            <person name="Rillo R."/>
            <person name="Anderson A.S."/>
            <person name="Starr D.A."/>
        </authorList>
    </citation>
    <scope>FUNCTION</scope>
    <scope>INTERACTION WITH UNC-83</scope>
    <scope>SUBCELLULAR LOCATION</scope>
    <scope>DOMAIN</scope>
    <scope>TOPOLOGY</scope>
</reference>
<reference key="8">
    <citation type="journal article" date="2010" name="J. Cell Biol.">
        <title>Kinesin-1 and dynein at the nuclear envelope mediate the bidirectional migrations of nuclei.</title>
        <authorList>
            <person name="Fridolfsson H.N."/>
            <person name="Starr D.A."/>
        </authorList>
    </citation>
    <scope>FUNCTION</scope>
</reference>
<reference key="9">
    <citation type="journal article" date="2011" name="Dev. Biol.">
        <title>The branched actin nucleator Arp2/3 promotes nuclear migrations and cell polarity in the C. elegans zygote.</title>
        <authorList>
            <person name="Xiong H."/>
            <person name="Mohler W.A."/>
            <person name="Soto M.C."/>
        </authorList>
    </citation>
    <scope>FUNCTION</scope>
    <scope>MUTAGENESIS OF CYS-994</scope>
</reference>
<reference key="10">
    <citation type="journal article" date="2011" name="Mol. Biol. Cell">
        <title>Multiple mechanisms actively target the SUN protein UNC-84 to the inner nuclear membrane.</title>
        <authorList>
            <person name="Tapley E.C."/>
            <person name="Ly N."/>
            <person name="Starr D.A."/>
        </authorList>
    </citation>
    <scope>FUNCTION</scope>
    <scope>SUBCELLULAR LOCATION</scope>
    <scope>MUTAGENESIS OF 1-MET--ARG-208 AND 118-TYR--LEU-244</scope>
</reference>
<reference key="11">
    <citation type="journal article" date="2013" name="Genetics">
        <title>toca-1 is in a novel pathway that functions in parallel with a SUN-KASH nuclear envelope bridge to move nuclei in Caenorhabditis elegans.</title>
        <authorList>
            <person name="Chang Y.T."/>
            <person name="Dranow D."/>
            <person name="Kuhn J."/>
            <person name="Meyerzon M."/>
            <person name="Ngo M."/>
            <person name="Ratner D."/>
            <person name="Warltier K."/>
            <person name="Starr D.A."/>
        </authorList>
    </citation>
    <scope>FUNCTION</scope>
</reference>
<reference key="12">
    <citation type="journal article" date="2014" name="J. Cell Biol.">
        <title>The SUN protein UNC-84 is required only in force-bearing cells to maintain nuclear envelope architecture.</title>
        <authorList>
            <person name="Cain N.E."/>
            <person name="Tapley E.C."/>
            <person name="McDonald K.L."/>
            <person name="Cain B.M."/>
            <person name="Starr D.A."/>
        </authorList>
    </citation>
    <scope>FUNCTION</scope>
</reference>
<reference key="13">
    <citation type="journal article" date="2014" name="Mol. Biol. Cell">
        <title>The Caenorhabditis elegans SUN protein UNC-84 interacts with lamin to transfer forces from the cytoplasm to the nucleoskeleton during nuclear migration.</title>
        <authorList>
            <person name="Bone C.R."/>
            <person name="Tapley E.C."/>
            <person name="Gorjanacz M."/>
            <person name="Starr D.A."/>
        </authorList>
    </citation>
    <scope>FUNCTION</scope>
    <scope>INTERACTION WITH LMN-1</scope>
    <scope>MUTAGENESIS OF 1-MET--ARG-208; 40-LEU--LYS-161 AND PRO-91</scope>
</reference>
<reference key="14">
    <citation type="journal article" date="2016" name="J. Cell Biol.">
        <title>LINC complexes promote homologous recombination in part through inhibition of nonhomologous end joining.</title>
        <authorList>
            <person name="Lawrence K.S."/>
            <person name="Tapley E.C."/>
            <person name="Cruz V.E."/>
            <person name="Li Q."/>
            <person name="Aung K."/>
            <person name="Hart K.C."/>
            <person name="Schwartz T.U."/>
            <person name="Starr D.A."/>
            <person name="Engebrecht J."/>
        </authorList>
    </citation>
    <scope>FUNCTION</scope>
    <scope>INTERACTION WITH ZYG-12</scope>
    <scope>SUBCELLULAR LOCATION</scope>
    <scope>MUTAGENESIS OF PRO-91; CYS-994 AND GLY-1002</scope>
</reference>
<name>UNC84_CAEEL</name>
<proteinExistence type="evidence at protein level"/>
<dbReference type="EMBL" id="AF200706">
    <property type="protein sequence ID" value="AAF15883.1"/>
    <property type="molecule type" value="mRNA"/>
</dbReference>
<dbReference type="EMBL" id="AF200707">
    <property type="protein sequence ID" value="AAF15884.1"/>
    <property type="molecule type" value="mRNA"/>
</dbReference>
<dbReference type="EMBL" id="Z70208">
    <property type="protein sequence ID" value="CAA94142.2"/>
    <property type="molecule type" value="Genomic_DNA"/>
</dbReference>
<dbReference type="EMBL" id="Z70208">
    <property type="protein sequence ID" value="CAC42306.1"/>
    <property type="molecule type" value="Genomic_DNA"/>
</dbReference>
<dbReference type="PIR" id="T22608">
    <property type="entry name" value="T22608"/>
</dbReference>
<dbReference type="RefSeq" id="NP_001024707.1">
    <molecule id="Q20745-1"/>
    <property type="nucleotide sequence ID" value="NM_001029536.6"/>
</dbReference>
<dbReference type="RefSeq" id="NP_001024708.1">
    <property type="nucleotide sequence ID" value="NM_001029537.3"/>
</dbReference>
<dbReference type="RefSeq" id="NP_001366990.1">
    <molecule id="Q20745-2"/>
    <property type="nucleotide sequence ID" value="NM_001381134.2"/>
</dbReference>
<dbReference type="SMR" id="Q20745"/>
<dbReference type="BioGRID" id="46381">
    <property type="interactions" value="13"/>
</dbReference>
<dbReference type="ComplexPortal" id="CPX-1385">
    <property type="entry name" value="unc-83-unc-84 LINC complex"/>
</dbReference>
<dbReference type="FunCoup" id="Q20745">
    <property type="interactions" value="376"/>
</dbReference>
<dbReference type="IntAct" id="Q20745">
    <property type="interactions" value="5"/>
</dbReference>
<dbReference type="STRING" id="6239.F54B11.3a.1"/>
<dbReference type="iPTMnet" id="Q20745"/>
<dbReference type="PaxDb" id="6239-F54B11.3a"/>
<dbReference type="PeptideAtlas" id="Q20745"/>
<dbReference type="EnsemblMetazoa" id="F54B11.3a.1">
    <molecule id="Q20745-1"/>
    <property type="protein sequence ID" value="F54B11.3a.1"/>
    <property type="gene ID" value="WBGene00006816"/>
</dbReference>
<dbReference type="EnsemblMetazoa" id="F54B11.3b.1">
    <molecule id="Q20745-2"/>
    <property type="protein sequence ID" value="F54B11.3b.1"/>
    <property type="gene ID" value="WBGene00006816"/>
</dbReference>
<dbReference type="GeneID" id="181480"/>
<dbReference type="KEGG" id="cel:CELE_F54B11.3"/>
<dbReference type="UCSC" id="F54B11.3b.2">
    <molecule id="Q20745-1"/>
    <property type="organism name" value="c. elegans"/>
</dbReference>
<dbReference type="AGR" id="WB:WBGene00006816"/>
<dbReference type="CTD" id="181480"/>
<dbReference type="WormBase" id="F54B11.3a">
    <molecule id="Q20745-1"/>
    <property type="protein sequence ID" value="CE28236"/>
    <property type="gene ID" value="WBGene00006816"/>
    <property type="gene designation" value="unc-84"/>
</dbReference>
<dbReference type="WormBase" id="F54B11.3b">
    <molecule id="Q20745-2"/>
    <property type="protein sequence ID" value="CE27761"/>
    <property type="gene ID" value="WBGene00006816"/>
    <property type="gene designation" value="unc-84"/>
</dbReference>
<dbReference type="eggNOG" id="KOG2687">
    <property type="taxonomic scope" value="Eukaryota"/>
</dbReference>
<dbReference type="GeneTree" id="ENSGT00940000167324"/>
<dbReference type="HOGENOM" id="CLU_009427_0_0_1"/>
<dbReference type="InParanoid" id="Q20745"/>
<dbReference type="OMA" id="LPDHWEV"/>
<dbReference type="OrthoDB" id="342281at2759"/>
<dbReference type="PRO" id="PR:Q20745"/>
<dbReference type="Proteomes" id="UP000001940">
    <property type="component" value="Chromosome X"/>
</dbReference>
<dbReference type="Bgee" id="WBGene00006816">
    <property type="expression patterns" value="Expressed in pharyngeal muscle cell (C elegans) and 4 other cell types or tissues"/>
</dbReference>
<dbReference type="GO" id="GO:0005737">
    <property type="term" value="C:cytoplasm"/>
    <property type="evidence" value="ECO:0007669"/>
    <property type="project" value="UniProtKB-KW"/>
</dbReference>
<dbReference type="GO" id="GO:0005856">
    <property type="term" value="C:cytoskeleton"/>
    <property type="evidence" value="ECO:0007669"/>
    <property type="project" value="UniProtKB-SubCell"/>
</dbReference>
<dbReference type="GO" id="GO:0034993">
    <property type="term" value="C:meiotic nuclear membrane microtubule tethering complex"/>
    <property type="evidence" value="ECO:0000353"/>
    <property type="project" value="ComplexPortal"/>
</dbReference>
<dbReference type="GO" id="GO:0016020">
    <property type="term" value="C:membrane"/>
    <property type="evidence" value="ECO:0000314"/>
    <property type="project" value="WormBase"/>
</dbReference>
<dbReference type="GO" id="GO:0005635">
    <property type="term" value="C:nuclear envelope"/>
    <property type="evidence" value="ECO:0000314"/>
    <property type="project" value="WormBase"/>
</dbReference>
<dbReference type="GO" id="GO:0005637">
    <property type="term" value="C:nuclear inner membrane"/>
    <property type="evidence" value="ECO:0000314"/>
    <property type="project" value="UniProtKB"/>
</dbReference>
<dbReference type="GO" id="GO:0005521">
    <property type="term" value="F:lamin binding"/>
    <property type="evidence" value="ECO:0000353"/>
    <property type="project" value="WormBase"/>
</dbReference>
<dbReference type="GO" id="GO:0043495">
    <property type="term" value="F:protein-membrane adaptor activity"/>
    <property type="evidence" value="ECO:0000318"/>
    <property type="project" value="GO_Central"/>
</dbReference>
<dbReference type="GO" id="GO:0018991">
    <property type="term" value="P:egg-laying behavior"/>
    <property type="evidence" value="ECO:0000315"/>
    <property type="project" value="WormBase"/>
</dbReference>
<dbReference type="GO" id="GO:0040011">
    <property type="term" value="P:locomotion"/>
    <property type="evidence" value="ECO:0000315"/>
    <property type="project" value="WormBase"/>
</dbReference>
<dbReference type="GO" id="GO:0007399">
    <property type="term" value="P:nervous system development"/>
    <property type="evidence" value="ECO:0000315"/>
    <property type="project" value="WormBase"/>
</dbReference>
<dbReference type="GO" id="GO:0007097">
    <property type="term" value="P:nuclear migration"/>
    <property type="evidence" value="ECO:0000315"/>
    <property type="project" value="WormBase"/>
</dbReference>
<dbReference type="GO" id="GO:0030473">
    <property type="term" value="P:nuclear migration along microtubule"/>
    <property type="evidence" value="ECO:0000315"/>
    <property type="project" value="WormBase"/>
</dbReference>
<dbReference type="GO" id="GO:0009791">
    <property type="term" value="P:post-embryonic development"/>
    <property type="evidence" value="ECO:0000315"/>
    <property type="project" value="WormBase"/>
</dbReference>
<dbReference type="GO" id="GO:0030334">
    <property type="term" value="P:regulation of cell migration"/>
    <property type="evidence" value="ECO:0000304"/>
    <property type="project" value="WormBase"/>
</dbReference>
<dbReference type="GO" id="GO:0040025">
    <property type="term" value="P:vulval development"/>
    <property type="evidence" value="ECO:0000315"/>
    <property type="project" value="WormBase"/>
</dbReference>
<dbReference type="FunFam" id="2.60.120.260:FF:000199">
    <property type="entry name" value="CRE-UNC-84 protein"/>
    <property type="match status" value="1"/>
</dbReference>
<dbReference type="Gene3D" id="2.60.120.260">
    <property type="entry name" value="Galactose-binding domain-like"/>
    <property type="match status" value="1"/>
</dbReference>
<dbReference type="InterPro" id="IPR045119">
    <property type="entry name" value="SUN1-5"/>
</dbReference>
<dbReference type="InterPro" id="IPR012919">
    <property type="entry name" value="SUN_dom"/>
</dbReference>
<dbReference type="PANTHER" id="PTHR12911:SF8">
    <property type="entry name" value="KLAROID PROTEIN-RELATED"/>
    <property type="match status" value="1"/>
</dbReference>
<dbReference type="PANTHER" id="PTHR12911">
    <property type="entry name" value="SAD1/UNC-84-LIKE PROTEIN-RELATED"/>
    <property type="match status" value="1"/>
</dbReference>
<dbReference type="Pfam" id="PF07738">
    <property type="entry name" value="Sad1_UNC"/>
    <property type="match status" value="1"/>
</dbReference>
<dbReference type="PROSITE" id="PS51469">
    <property type="entry name" value="SUN"/>
    <property type="match status" value="1"/>
</dbReference>
<keyword id="KW-0025">Alternative splicing</keyword>
<keyword id="KW-0963">Cytoplasm</keyword>
<keyword id="KW-0206">Cytoskeleton</keyword>
<keyword id="KW-0217">Developmental protein</keyword>
<keyword id="KW-0472">Membrane</keyword>
<keyword id="KW-0539">Nucleus</keyword>
<keyword id="KW-1185">Reference proteome</keyword>
<keyword id="KW-0735">Signal-anchor</keyword>
<keyword id="KW-0812">Transmembrane</keyword>
<keyword id="KW-1133">Transmembrane helix</keyword>
<accession>Q20745</accession>
<accession>Q9U475</accession>
<accession>Q9U476</accession>
<gene>
    <name evidence="20" type="primary">unc-84</name>
    <name evidence="21" type="ORF">F54B11.3</name>
</gene>
<evidence type="ECO:0000255" key="1">
    <source>
        <dbReference type="PROSITE-ProRule" id="PRU00802"/>
    </source>
</evidence>
<evidence type="ECO:0000256" key="2">
    <source>
        <dbReference type="SAM" id="MobiDB-lite"/>
    </source>
</evidence>
<evidence type="ECO:0000269" key="3">
    <source>
    </source>
</evidence>
<evidence type="ECO:0000269" key="4">
    <source>
    </source>
</evidence>
<evidence type="ECO:0000269" key="5">
    <source>
    </source>
</evidence>
<evidence type="ECO:0000269" key="6">
    <source>
    </source>
</evidence>
<evidence type="ECO:0000269" key="7">
    <source>
    </source>
</evidence>
<evidence type="ECO:0000269" key="8">
    <source>
    </source>
</evidence>
<evidence type="ECO:0000269" key="9">
    <source>
    </source>
</evidence>
<evidence type="ECO:0000269" key="10">
    <source>
    </source>
</evidence>
<evidence type="ECO:0000269" key="11">
    <source>
    </source>
</evidence>
<evidence type="ECO:0000269" key="12">
    <source>
    </source>
</evidence>
<evidence type="ECO:0000269" key="13">
    <source>
    </source>
</evidence>
<evidence type="ECO:0000269" key="14">
    <source>
    </source>
</evidence>
<evidence type="ECO:0000303" key="15">
    <source>
    </source>
</evidence>
<evidence type="ECO:0000303" key="16">
    <source>
    </source>
</evidence>
<evidence type="ECO:0000305" key="17"/>
<evidence type="ECO:0000305" key="18">
    <source>
    </source>
</evidence>
<evidence type="ECO:0000305" key="19">
    <source>
    </source>
</evidence>
<evidence type="ECO:0000312" key="20">
    <source>
        <dbReference type="WormBase" id="F54B11.3a"/>
    </source>
</evidence>
<evidence type="ECO:0000312" key="21">
    <source>
        <dbReference type="WormBase" id="F54B11.3b"/>
    </source>
</evidence>
<sequence>MAPATEADNNFDTHEWKSEFASTRSGRNSPNIFAKVRRKLLLTPPVRNARSPRLTEEELDALTGDLPYATNYTYAYSKIYDPSLPDHWEVPNLGGTTSGSLSEQEHWSAASLSRQLLYILRFPVYLVLHVITYILEAFYHVIKITSFTIWDYLLYLVKLAKTRYYAYQDHRRRTALIRNRQEPFSTKAARSIRRFFEILVYVVLTPYRMLTRSNNGVEQYQYRSIKDQLENERASRMTTRSQTLERSRKFDGLSKSPARRAAPAFVKTSTITRITAKVFSSSPFGEGTSENITPTVVTTRTVKQRSVTPRFRQTRATREAITRALDTPELEIDTPLSTYGLRSRGLSHLNTPEPTFDIGHAAATSTPLFPQETYNYQYEEATGNKIKTAFTWLGYLILFPFFAARHVWYTFYDYGKSAYMKLTNYQQAPMETIHVRDINEPAPSSSDVHDAVGVSWRIRIADFLSSFVATIVEAHQVVFAMFKGGIVETVSYFGGLFAGLTDKKSSKFSWCQILGLLLALLFAIFLLGFLTSDNTAIRVKEITKDKNASKKSEGSLPAVPIWISAANHVKHYTWMVKEFVVDIAFDTYNYGKSTIGRLGTTPRYAWDLIASGCGAVGNGLKSVLSSSFRFIDFCAGKLFYYGSDGFLSANKSIGTFFNGCYETLYNGCTAIVGHTKSFIYNASNAVYNFFSTIFAGLLNFSTSSQNSILSLLKSFGTGITNIFYNFIYAPIAGVFNFAGDNYMYFFNEVAAVFGKVYNSVVSVLKTVINWILFLIAYPFSLCTRAWIRISQYAPEDVVQVIPIPQAITPTPDVERIVEEPLRKVTDVEDEELVIIPAPAPKPIPVPAPTPAPVIIHQTNVVETVDKDAIIKEVTEKLRAELSAQFQQELSAKFEQNYNTIIEQLKMENTNIQYDKNHLEAIIRQMIYEYDTDKTGKVDYALESSGGAVVSTRCSETYKSYTRLEKFWDIPIYYFHYSPRVVIQRNSKSLFPGECWCFKESRGYIAVELSHFIDVSSISYEHIGSEVAPEGNRSSAPKGVLVWAYKQIDDLNSRVLIGDYTYDLDGPPLQFFLAKHKPDFPVKFVELEVTSNYGAPFTCLYRLRVHGKVVQV</sequence>
<feature type="chain" id="PRO_0000218910" description="Nuclear migration and anchoring protein unc-84">
    <location>
        <begin position="1"/>
        <end position="1111"/>
    </location>
</feature>
<feature type="topological domain" description="Nuclear" evidence="7">
    <location>
        <begin position="1"/>
        <end position="509"/>
    </location>
</feature>
<feature type="transmembrane region" description="Helical" evidence="19">
    <location>
        <begin position="510"/>
        <end position="530"/>
    </location>
</feature>
<feature type="topological domain" description="Perinuclear space" evidence="7">
    <location>
        <begin position="531"/>
        <end position="1111"/>
    </location>
</feature>
<feature type="domain" description="SUN" evidence="1">
    <location>
        <begin position="945"/>
        <end position="1109"/>
    </location>
</feature>
<feature type="region of interest" description="Required for nuclear envelope localization" evidence="9">
    <location>
        <begin position="118"/>
        <end position="244"/>
    </location>
</feature>
<feature type="region of interest" description="Disordered" evidence="2">
    <location>
        <begin position="232"/>
        <end position="253"/>
    </location>
</feature>
<feature type="region of interest" description="Required for nuclear envelope localization" evidence="9">
    <location>
        <begin position="503"/>
        <end position="507"/>
    </location>
</feature>
<feature type="region of interest" description="Interaction with zyg-12" evidence="14">
    <location>
        <begin position="912"/>
        <end position="1111"/>
    </location>
</feature>
<feature type="compositionally biased region" description="Basic and acidic residues" evidence="2">
    <location>
        <begin position="243"/>
        <end position="252"/>
    </location>
</feature>
<feature type="site" description="May be involved in the interaction with lmn-1" evidence="13">
    <location>
        <position position="91"/>
    </location>
</feature>
<feature type="splice variant" id="VSP_007081" description="In isoform b." evidence="15">
    <original>LRA</original>
    <variation>VTN</variation>
    <location>
        <begin position="877"/>
        <end position="879"/>
    </location>
</feature>
<feature type="splice variant" id="VSP_007082" description="In isoform b." evidence="15">
    <location>
        <begin position="880"/>
        <end position="1111"/>
    </location>
</feature>
<feature type="mutagenesis site" description="In n322; defects in nuclear migration in hyp7 hypodermal precursor cells. No nuclear envelope localization defects in hyp7 precursor cells. Does not affect the localization of unc-83 to the nuclear membrane in embryos." evidence="3 4 9 13">
    <location>
        <begin position="1"/>
        <end position="208"/>
    </location>
</feature>
<feature type="mutagenesis site" description="In e1174; defects in nuclear migration in distal tip cells and hyp7 hypodermal precursor cells." evidence="3 13">
    <location>
        <begin position="40"/>
        <end position="161"/>
    </location>
</feature>
<feature type="mutagenesis site" description="In e1411; defective nuclear migration in hyp7 hypodermal precursor cells. Does not affect unc-83 localization to the nuclear membrane in embryos. May reduce interaction with lmn-1. Reduces number of viable progeny following incubation with the DNA cross-linking agent cisplatin." evidence="3 4 13 14 18">
    <original>P</original>
    <variation>S</variation>
    <location>
        <position position="91"/>
    </location>
</feature>
<feature type="mutagenesis site" description="Abolishes localization to the nuclear envelope of hyp7 precursor cells." evidence="9">
    <location>
        <begin position="118"/>
        <end position="244"/>
    </location>
</feature>
<feature type="mutagenesis site" description="In n323; defective nuclear migration and anchoring in hyp7 hypodermal precursor cells. No defects in localization to the nuclear envelope, however unc-83 localization to the nuclear envelope is abolished." evidence="3 4 5">
    <original>D</original>
    <variation>N</variation>
    <location>
        <position position="932"/>
    </location>
</feature>
<feature type="mutagenesis site" description="In n371; defects in nuclear migration and anchoring in hyp7 hypodermal precursor cells. No defects in localization to the nuclear envelope, however unc-83 localization to the nuclear envelope is abolished." evidence="3 4 5">
    <original>R</original>
    <variation>K</variation>
    <location>
        <position position="984"/>
    </location>
</feature>
<feature type="mutagenesis site" description="In sa61; defects in nuclear migration and anchoring in hyp7 hypodermal precursor cells. No defects in localization to the nuclear envelope, however unc-83 localization to the nuclear envelope is abolished." evidence="3 4 5">
    <original>S</original>
    <variation>F</variation>
    <location>
        <position position="988"/>
    </location>
</feature>
<feature type="mutagenesis site" description="In e1410; defects in nuclear migration and anchoring in hyp7 hypodermal precursor cells. Defective male pronuclear migration in one-cell embryos following fertilization. Reduced number of viable progeny following incubation with the DNA cross-linking agent cisplatin." evidence="3 10 14">
    <original>C</original>
    <variation>Y</variation>
    <location>
        <position position="994"/>
    </location>
</feature>
<feature type="mutagenesis site" description="In n321 and n399; defects in nuclear migration and anchoring in hyp7 hypodermal precursor cells. No defects in localization to the nuclear envelope, however unc-83 localization to the nuclear envelope is abolished. Reduced number of viable progeny following incubation with the DNA cross-linking agent cisplatin." evidence="3 4 5 6 14">
    <original>G</original>
    <variation>D</variation>
    <location>
        <position position="1002"/>
    </location>
</feature>